<comment type="subcellular location">
    <subcellularLocation>
        <location evidence="2">Membrane</location>
        <topology evidence="2">Single-pass type I membrane protein</topology>
    </subcellularLocation>
</comment>
<gene>
    <name type="ORF">DDB_G0281067</name>
</gene>
<feature type="signal peptide" evidence="1">
    <location>
        <begin position="1"/>
        <end position="20"/>
    </location>
</feature>
<feature type="chain" id="PRO_0000352401" description="Uncharacterized transmembrane protein DDB_G0281067">
    <location>
        <begin position="21"/>
        <end position="300"/>
    </location>
</feature>
<feature type="topological domain" description="Extracellular" evidence="1">
    <location>
        <begin position="21"/>
        <end position="279"/>
    </location>
</feature>
<feature type="transmembrane region" description="Helical" evidence="1">
    <location>
        <begin position="280"/>
        <end position="300"/>
    </location>
</feature>
<feature type="glycosylation site" description="N-linked (GlcNAc...) asparagine" evidence="1">
    <location>
        <position position="56"/>
    </location>
</feature>
<feature type="glycosylation site" description="N-linked (GlcNAc...) asparagine" evidence="1">
    <location>
        <position position="217"/>
    </location>
</feature>
<feature type="glycosylation site" description="N-linked (GlcNAc...) asparagine" evidence="1">
    <location>
        <position position="278"/>
    </location>
</feature>
<name>Y3989_DICDI</name>
<organism>
    <name type="scientific">Dictyostelium discoideum</name>
    <name type="common">Social amoeba</name>
    <dbReference type="NCBI Taxonomy" id="44689"/>
    <lineage>
        <taxon>Eukaryota</taxon>
        <taxon>Amoebozoa</taxon>
        <taxon>Evosea</taxon>
        <taxon>Eumycetozoa</taxon>
        <taxon>Dictyostelia</taxon>
        <taxon>Dictyosteliales</taxon>
        <taxon>Dictyosteliaceae</taxon>
        <taxon>Dictyostelium</taxon>
    </lineage>
</organism>
<accession>Q54UI0</accession>
<sequence>MRLLISCILILSILVNFISGHAVLVAPTPFSTNPSKTKLCGGGTKQTVAQITWCPNSSKTNRATWKIVVGDGAGAVTFKLATNGGTTEGDFTTTLTSKVLSGSDPKEVGTYYMDVRVPTGTTCTGTNGICTLQAYTESSGWYSCSAIKLDSSACDKAAEETALVEYNVQVKDNVKFCDQVVNKVVLLPAGTQLGEYDQRTQGVFKNNMANPLVIGQNSSQCGNLYEKVLCDVSFPLAPGSDGKPIYQVTQKQCEDFIEVCDVVSHVELYPCSIYGDGNGSNLIIIPTLLIISILSLILMF</sequence>
<protein>
    <recommendedName>
        <fullName>Uncharacterized transmembrane protein DDB_G0281067</fullName>
    </recommendedName>
</protein>
<evidence type="ECO:0000255" key="1"/>
<evidence type="ECO:0000305" key="2"/>
<keyword id="KW-0325">Glycoprotein</keyword>
<keyword id="KW-0472">Membrane</keyword>
<keyword id="KW-1185">Reference proteome</keyword>
<keyword id="KW-0732">Signal</keyword>
<keyword id="KW-0812">Transmembrane</keyword>
<keyword id="KW-1133">Transmembrane helix</keyword>
<dbReference type="EMBL" id="AAFI02000040">
    <property type="protein sequence ID" value="EAL66830.1"/>
    <property type="molecule type" value="Genomic_DNA"/>
</dbReference>
<dbReference type="RefSeq" id="XP_640796.1">
    <property type="nucleotide sequence ID" value="XM_635704.1"/>
</dbReference>
<dbReference type="FunCoup" id="Q54UI0">
    <property type="interactions" value="553"/>
</dbReference>
<dbReference type="GlyGen" id="Q54UI0">
    <property type="glycosylation" value="4 sites"/>
</dbReference>
<dbReference type="PaxDb" id="44689-DDB0238139"/>
<dbReference type="EnsemblProtists" id="EAL66830">
    <property type="protein sequence ID" value="EAL66830"/>
    <property type="gene ID" value="DDB_G0281067"/>
</dbReference>
<dbReference type="GeneID" id="8622849"/>
<dbReference type="KEGG" id="ddi:DDB_G0281067"/>
<dbReference type="dictyBase" id="DDB_G0281067"/>
<dbReference type="VEuPathDB" id="AmoebaDB:DDB_G0281067"/>
<dbReference type="eggNOG" id="ENOG502RHG4">
    <property type="taxonomic scope" value="Eukaryota"/>
</dbReference>
<dbReference type="HOGENOM" id="CLU_928816_0_0_1"/>
<dbReference type="InParanoid" id="Q54UI0"/>
<dbReference type="OMA" id="NDTNCAN"/>
<dbReference type="PRO" id="PR:Q54UI0"/>
<dbReference type="Proteomes" id="UP000002195">
    <property type="component" value="Chromosome 3"/>
</dbReference>
<dbReference type="GO" id="GO:0016020">
    <property type="term" value="C:membrane"/>
    <property type="evidence" value="ECO:0007669"/>
    <property type="project" value="UniProtKB-SubCell"/>
</dbReference>
<dbReference type="GO" id="GO:0045335">
    <property type="term" value="C:phagocytic vesicle"/>
    <property type="evidence" value="ECO:0007005"/>
    <property type="project" value="dictyBase"/>
</dbReference>
<dbReference type="Gene3D" id="1.10.2000.10">
    <property type="entry name" value="Frizzled cysteine-rich domain"/>
    <property type="match status" value="1"/>
</dbReference>
<dbReference type="InterPro" id="IPR036790">
    <property type="entry name" value="Frizzled_dom_sf"/>
</dbReference>
<proteinExistence type="evidence at protein level"/>
<reference key="1">
    <citation type="journal article" date="2005" name="Nature">
        <title>The genome of the social amoeba Dictyostelium discoideum.</title>
        <authorList>
            <person name="Eichinger L."/>
            <person name="Pachebat J.A."/>
            <person name="Gloeckner G."/>
            <person name="Rajandream M.A."/>
            <person name="Sucgang R."/>
            <person name="Berriman M."/>
            <person name="Song J."/>
            <person name="Olsen R."/>
            <person name="Szafranski K."/>
            <person name="Xu Q."/>
            <person name="Tunggal B."/>
            <person name="Kummerfeld S."/>
            <person name="Madera M."/>
            <person name="Konfortov B.A."/>
            <person name="Rivero F."/>
            <person name="Bankier A.T."/>
            <person name="Lehmann R."/>
            <person name="Hamlin N."/>
            <person name="Davies R."/>
            <person name="Gaudet P."/>
            <person name="Fey P."/>
            <person name="Pilcher K."/>
            <person name="Chen G."/>
            <person name="Saunders D."/>
            <person name="Sodergren E.J."/>
            <person name="Davis P."/>
            <person name="Kerhornou A."/>
            <person name="Nie X."/>
            <person name="Hall N."/>
            <person name="Anjard C."/>
            <person name="Hemphill L."/>
            <person name="Bason N."/>
            <person name="Farbrother P."/>
            <person name="Desany B."/>
            <person name="Just E."/>
            <person name="Morio T."/>
            <person name="Rost R."/>
            <person name="Churcher C.M."/>
            <person name="Cooper J."/>
            <person name="Haydock S."/>
            <person name="van Driessche N."/>
            <person name="Cronin A."/>
            <person name="Goodhead I."/>
            <person name="Muzny D.M."/>
            <person name="Mourier T."/>
            <person name="Pain A."/>
            <person name="Lu M."/>
            <person name="Harper D."/>
            <person name="Lindsay R."/>
            <person name="Hauser H."/>
            <person name="James K.D."/>
            <person name="Quiles M."/>
            <person name="Madan Babu M."/>
            <person name="Saito T."/>
            <person name="Buchrieser C."/>
            <person name="Wardroper A."/>
            <person name="Felder M."/>
            <person name="Thangavelu M."/>
            <person name="Johnson D."/>
            <person name="Knights A."/>
            <person name="Loulseged H."/>
            <person name="Mungall K.L."/>
            <person name="Oliver K."/>
            <person name="Price C."/>
            <person name="Quail M.A."/>
            <person name="Urushihara H."/>
            <person name="Hernandez J."/>
            <person name="Rabbinowitsch E."/>
            <person name="Steffen D."/>
            <person name="Sanders M."/>
            <person name="Ma J."/>
            <person name="Kohara Y."/>
            <person name="Sharp S."/>
            <person name="Simmonds M.N."/>
            <person name="Spiegler S."/>
            <person name="Tivey A."/>
            <person name="Sugano S."/>
            <person name="White B."/>
            <person name="Walker D."/>
            <person name="Woodward J.R."/>
            <person name="Winckler T."/>
            <person name="Tanaka Y."/>
            <person name="Shaulsky G."/>
            <person name="Schleicher M."/>
            <person name="Weinstock G.M."/>
            <person name="Rosenthal A."/>
            <person name="Cox E.C."/>
            <person name="Chisholm R.L."/>
            <person name="Gibbs R.A."/>
            <person name="Loomis W.F."/>
            <person name="Platzer M."/>
            <person name="Kay R.R."/>
            <person name="Williams J.G."/>
            <person name="Dear P.H."/>
            <person name="Noegel A.A."/>
            <person name="Barrell B.G."/>
            <person name="Kuspa A."/>
        </authorList>
    </citation>
    <scope>NUCLEOTIDE SEQUENCE [LARGE SCALE GENOMIC DNA]</scope>
    <source>
        <strain>AX4</strain>
    </source>
</reference>
<reference key="2">
    <citation type="journal article" date="2006" name="Mol. Cell. Proteomics">
        <title>Proteomics fingerprinting of phagosome maturation and evidence for the role of a Galpha during uptake.</title>
        <authorList>
            <person name="Gotthardt D."/>
            <person name="Blancheteau V."/>
            <person name="Bosserhoff A."/>
            <person name="Ruppert T."/>
            <person name="Delorenzi M."/>
            <person name="Soldati T."/>
        </authorList>
    </citation>
    <scope>IDENTIFICATION BY MASS SPECTROMETRY [LARGE SCALE ANALYSIS]</scope>
    <source>
        <strain>AX2</strain>
    </source>
</reference>